<feature type="chain" id="PRO_0000430567" description="Transcriptional regulatory protein MctR">
    <location>
        <begin position="1"/>
        <end position="214"/>
    </location>
</feature>
<feature type="domain" description="Response regulatory" evidence="1">
    <location>
        <begin position="8"/>
        <end position="124"/>
    </location>
</feature>
<feature type="domain" description="HTH luxR-type" evidence="2">
    <location>
        <begin position="143"/>
        <end position="208"/>
    </location>
</feature>
<feature type="DNA-binding region" description="H-T-H motif" evidence="2">
    <location>
        <begin position="167"/>
        <end position="186"/>
    </location>
</feature>
<feature type="modified residue" description="4-aspartylphosphate" evidence="1">
    <location>
        <position position="59"/>
    </location>
</feature>
<accession>Q1M7A0</accession>
<accession>Q8RJZ9</accession>
<proteinExistence type="inferred from homology"/>
<sequence length="214" mass="23060">MTERPKIRVLLIDNHPLVLDGLKAVLETFDHIEVAGTAGLAQTGLEIGRQILPQVVLMDINMPKLSGIDAIELFRNELPQARVVMLSMHDSREYISSSVMHGAAGYILKDVSTDEIVSAIETVAGGGTYFSSGVFDALMGERVEEGSDPLTPRERDILGLIVAGRSNKEIAETLGITSATAETHRKNLKKKLGITTTAGLIRYALDHGIVSKVG</sequence>
<keyword id="KW-0010">Activator</keyword>
<keyword id="KW-0963">Cytoplasm</keyword>
<keyword id="KW-0238">DNA-binding</keyword>
<keyword id="KW-0597">Phosphoprotein</keyword>
<keyword id="KW-0614">Plasmid</keyword>
<keyword id="KW-0804">Transcription</keyword>
<keyword id="KW-0805">Transcription regulation</keyword>
<keyword id="KW-0902">Two-component regulatory system</keyword>
<protein>
    <recommendedName>
        <fullName evidence="5">Transcriptional regulatory protein MctR</fullName>
    </recommendedName>
</protein>
<gene>
    <name evidence="4" type="primary">mctR</name>
    <name evidence="6" type="ordered locus">pRL100406</name>
</gene>
<name>MCTR_RHIJ3</name>
<dbReference type="EMBL" id="AJ421944">
    <property type="protein sequence ID" value="CAD19127.2"/>
    <property type="molecule type" value="Genomic_DNA"/>
</dbReference>
<dbReference type="EMBL" id="AM236084">
    <property type="protein sequence ID" value="CAK10632.1"/>
    <property type="molecule type" value="Genomic_DNA"/>
</dbReference>
<dbReference type="RefSeq" id="WP_011654430.1">
    <property type="nucleotide sequence ID" value="NC_008381.1"/>
</dbReference>
<dbReference type="SMR" id="Q1M7A0"/>
<dbReference type="EnsemblBacteria" id="CAK10632">
    <property type="protein sequence ID" value="CAK10632"/>
    <property type="gene ID" value="pRL100406"/>
</dbReference>
<dbReference type="KEGG" id="rle:pRL100406"/>
<dbReference type="HOGENOM" id="CLU_000445_90_1_5"/>
<dbReference type="Proteomes" id="UP000006575">
    <property type="component" value="Plasmid pRL10"/>
</dbReference>
<dbReference type="GO" id="GO:0005737">
    <property type="term" value="C:cytoplasm"/>
    <property type="evidence" value="ECO:0007669"/>
    <property type="project" value="UniProtKB-SubCell"/>
</dbReference>
<dbReference type="GO" id="GO:0003677">
    <property type="term" value="F:DNA binding"/>
    <property type="evidence" value="ECO:0007669"/>
    <property type="project" value="UniProtKB-KW"/>
</dbReference>
<dbReference type="GO" id="GO:0000160">
    <property type="term" value="P:phosphorelay signal transduction system"/>
    <property type="evidence" value="ECO:0007669"/>
    <property type="project" value="UniProtKB-KW"/>
</dbReference>
<dbReference type="GO" id="GO:0006355">
    <property type="term" value="P:regulation of DNA-templated transcription"/>
    <property type="evidence" value="ECO:0007669"/>
    <property type="project" value="InterPro"/>
</dbReference>
<dbReference type="CDD" id="cd06170">
    <property type="entry name" value="LuxR_C_like"/>
    <property type="match status" value="1"/>
</dbReference>
<dbReference type="CDD" id="cd17535">
    <property type="entry name" value="REC_NarL-like"/>
    <property type="match status" value="1"/>
</dbReference>
<dbReference type="Gene3D" id="3.40.50.2300">
    <property type="match status" value="1"/>
</dbReference>
<dbReference type="InterPro" id="IPR011006">
    <property type="entry name" value="CheY-like_superfamily"/>
</dbReference>
<dbReference type="InterPro" id="IPR016032">
    <property type="entry name" value="Sig_transdc_resp-reg_C-effctor"/>
</dbReference>
<dbReference type="InterPro" id="IPR001789">
    <property type="entry name" value="Sig_transdc_resp-reg_receiver"/>
</dbReference>
<dbReference type="InterPro" id="IPR000792">
    <property type="entry name" value="Tscrpt_reg_LuxR_C"/>
</dbReference>
<dbReference type="InterPro" id="IPR039420">
    <property type="entry name" value="WalR-like"/>
</dbReference>
<dbReference type="PANTHER" id="PTHR43214:SF41">
    <property type="entry name" value="NITRATE_NITRITE RESPONSE REGULATOR PROTEIN NARP"/>
    <property type="match status" value="1"/>
</dbReference>
<dbReference type="PANTHER" id="PTHR43214">
    <property type="entry name" value="TWO-COMPONENT RESPONSE REGULATOR"/>
    <property type="match status" value="1"/>
</dbReference>
<dbReference type="Pfam" id="PF00196">
    <property type="entry name" value="GerE"/>
    <property type="match status" value="1"/>
</dbReference>
<dbReference type="Pfam" id="PF00072">
    <property type="entry name" value="Response_reg"/>
    <property type="match status" value="1"/>
</dbReference>
<dbReference type="PRINTS" id="PR00038">
    <property type="entry name" value="HTHLUXR"/>
</dbReference>
<dbReference type="SMART" id="SM00421">
    <property type="entry name" value="HTH_LUXR"/>
    <property type="match status" value="1"/>
</dbReference>
<dbReference type="SMART" id="SM00448">
    <property type="entry name" value="REC"/>
    <property type="match status" value="1"/>
</dbReference>
<dbReference type="SUPFAM" id="SSF46894">
    <property type="entry name" value="C-terminal effector domain of the bipartite response regulators"/>
    <property type="match status" value="1"/>
</dbReference>
<dbReference type="SUPFAM" id="SSF52172">
    <property type="entry name" value="CheY-like"/>
    <property type="match status" value="1"/>
</dbReference>
<dbReference type="PROSITE" id="PS50043">
    <property type="entry name" value="HTH_LUXR_2"/>
    <property type="match status" value="1"/>
</dbReference>
<dbReference type="PROSITE" id="PS50110">
    <property type="entry name" value="RESPONSE_REGULATORY"/>
    <property type="match status" value="1"/>
</dbReference>
<geneLocation type="plasmid" evidence="6">
    <name>pRL10</name>
</geneLocation>
<comment type="function">
    <text evidence="3">Member of the two-component regulatory system MctS/MctR, which activates mctP expression.</text>
</comment>
<comment type="subcellular location">
    <subcellularLocation>
        <location evidence="5">Cytoplasm</location>
    </subcellularLocation>
</comment>
<evidence type="ECO:0000255" key="1">
    <source>
        <dbReference type="PROSITE-ProRule" id="PRU00169"/>
    </source>
</evidence>
<evidence type="ECO:0000255" key="2">
    <source>
        <dbReference type="PROSITE-ProRule" id="PRU00411"/>
    </source>
</evidence>
<evidence type="ECO:0000269" key="3">
    <source>
    </source>
</evidence>
<evidence type="ECO:0000303" key="4">
    <source>
    </source>
</evidence>
<evidence type="ECO:0000305" key="5"/>
<evidence type="ECO:0000312" key="6">
    <source>
        <dbReference type="EMBL" id="CAK10632.1"/>
    </source>
</evidence>
<reference key="1">
    <citation type="journal article" date="2002" name="J. Bacteriol.">
        <title>A monocarboxylate permease of Rhizobium leguminosarum is the first member of a new subfamily of transporters.</title>
        <authorList>
            <person name="Hosie A.H."/>
            <person name="Allaway D."/>
            <person name="Poole P.S."/>
        </authorList>
    </citation>
    <scope>NUCLEOTIDE SEQUENCE [GENOMIC DNA]</scope>
    <scope>FUNCTION</scope>
    <source>
        <strain>DSM 114642 / LMG 32736 / 3841</strain>
    </source>
</reference>
<reference key="2">
    <citation type="journal article" date="2006" name="Genome Biol.">
        <title>The genome of Rhizobium leguminosarum has recognizable core and accessory components.</title>
        <authorList>
            <person name="Young J.P.W."/>
            <person name="Crossman L.C."/>
            <person name="Johnston A.W.B."/>
            <person name="Thomson N.R."/>
            <person name="Ghazoui Z.F."/>
            <person name="Hull K.H."/>
            <person name="Wexler M."/>
            <person name="Curson A.R.J."/>
            <person name="Todd J.D."/>
            <person name="Poole P.S."/>
            <person name="Mauchline T.H."/>
            <person name="East A.K."/>
            <person name="Quail M.A."/>
            <person name="Churcher C."/>
            <person name="Arrowsmith C."/>
            <person name="Cherevach I."/>
            <person name="Chillingworth T."/>
            <person name="Clarke K."/>
            <person name="Cronin A."/>
            <person name="Davis P."/>
            <person name="Fraser A."/>
            <person name="Hance Z."/>
            <person name="Hauser H."/>
            <person name="Jagels K."/>
            <person name="Moule S."/>
            <person name="Mungall K."/>
            <person name="Norbertczak H."/>
            <person name="Rabbinowitsch E."/>
            <person name="Sanders M."/>
            <person name="Simmonds M."/>
            <person name="Whitehead S."/>
            <person name="Parkhill J."/>
        </authorList>
    </citation>
    <scope>NUCLEOTIDE SEQUENCE [LARGE SCALE GENOMIC DNA]</scope>
    <source>
        <strain>DSM 114642 / LMG 32736 / 3841</strain>
    </source>
</reference>
<organism>
    <name type="scientific">Rhizobium johnstonii (strain DSM 114642 / LMG 32736 / 3841)</name>
    <name type="common">Rhizobium leguminosarum bv. viciae</name>
    <dbReference type="NCBI Taxonomy" id="216596"/>
    <lineage>
        <taxon>Bacteria</taxon>
        <taxon>Pseudomonadati</taxon>
        <taxon>Pseudomonadota</taxon>
        <taxon>Alphaproteobacteria</taxon>
        <taxon>Hyphomicrobiales</taxon>
        <taxon>Rhizobiaceae</taxon>
        <taxon>Rhizobium/Agrobacterium group</taxon>
        <taxon>Rhizobium</taxon>
        <taxon>Rhizobium johnstonii</taxon>
    </lineage>
</organism>